<keyword id="KW-0025">Alternative splicing</keyword>
<keyword id="KW-0963">Cytoplasm</keyword>
<keyword id="KW-0378">Hydrolase</keyword>
<keyword id="KW-0460">Magnesium</keyword>
<keyword id="KW-0479">Metal-binding</keyword>
<keyword id="KW-0546">Nucleotide metabolism</keyword>
<keyword id="KW-0547">Nucleotide-binding</keyword>
<keyword id="KW-1185">Reference proteome</keyword>
<dbReference type="EC" id="3.1.3.5" evidence="1"/>
<dbReference type="EMBL" id="FO081045">
    <property type="protein sequence ID" value="CCD68774.1"/>
    <property type="molecule type" value="Genomic_DNA"/>
</dbReference>
<dbReference type="EMBL" id="FO081045">
    <property type="protein sequence ID" value="CCD68775.1"/>
    <property type="molecule type" value="Genomic_DNA"/>
</dbReference>
<dbReference type="EMBL" id="FO081045">
    <property type="protein sequence ID" value="CCD68776.1"/>
    <property type="molecule type" value="Genomic_DNA"/>
</dbReference>
<dbReference type="RefSeq" id="NP_001367732.1">
    <molecule id="Q09315-3"/>
    <property type="nucleotide sequence ID" value="NM_001379734.1"/>
</dbReference>
<dbReference type="RefSeq" id="NP_498293.1">
    <molecule id="Q09315-1"/>
    <property type="nucleotide sequence ID" value="NM_065892.7"/>
</dbReference>
<dbReference type="RefSeq" id="NP_498294.1">
    <molecule id="Q09315-2"/>
    <property type="nucleotide sequence ID" value="NM_065893.5"/>
</dbReference>
<dbReference type="RefSeq" id="NP_741162.1">
    <property type="nucleotide sequence ID" value="NM_171142.3"/>
</dbReference>
<dbReference type="SMR" id="Q09315"/>
<dbReference type="BioGRID" id="41064">
    <property type="interactions" value="1"/>
</dbReference>
<dbReference type="FunCoup" id="Q09315">
    <property type="interactions" value="2005"/>
</dbReference>
<dbReference type="STRING" id="6239.F25B5.3b.1"/>
<dbReference type="PaxDb" id="6239-F25B5.3b"/>
<dbReference type="EnsemblMetazoa" id="F25B5.3a.1">
    <molecule id="Q09315-2"/>
    <property type="protein sequence ID" value="F25B5.3a.1"/>
    <property type="gene ID" value="WBGene00017775"/>
</dbReference>
<dbReference type="EnsemblMetazoa" id="F25B5.3b.1">
    <molecule id="Q09315-1"/>
    <property type="protein sequence ID" value="F25B5.3b.1"/>
    <property type="gene ID" value="WBGene00017775"/>
</dbReference>
<dbReference type="EnsemblMetazoa" id="F25B5.3c.1">
    <molecule id="Q09315-3"/>
    <property type="protein sequence ID" value="F25B5.3c.1"/>
    <property type="gene ID" value="WBGene00017775"/>
</dbReference>
<dbReference type="GeneID" id="175843"/>
<dbReference type="KEGG" id="cel:CELE_F25B5.3"/>
<dbReference type="UCSC" id="F25B5.3c.4">
    <molecule id="Q09315-1"/>
    <property type="organism name" value="c. elegans"/>
</dbReference>
<dbReference type="AGR" id="WB:WBGene00017775"/>
<dbReference type="CTD" id="175843"/>
<dbReference type="WormBase" id="F25B5.3a">
    <molecule id="Q09315-2"/>
    <property type="protein sequence ID" value="CE26890"/>
    <property type="gene ID" value="WBGene00017775"/>
</dbReference>
<dbReference type="WormBase" id="F25B5.3b">
    <molecule id="Q09315-1"/>
    <property type="protein sequence ID" value="CE28001"/>
    <property type="gene ID" value="WBGene00017775"/>
</dbReference>
<dbReference type="WormBase" id="F25B5.3c">
    <molecule id="Q09315-3"/>
    <property type="protein sequence ID" value="CE29776"/>
    <property type="gene ID" value="WBGene00017775"/>
</dbReference>
<dbReference type="eggNOG" id="KOG3128">
    <property type="taxonomic scope" value="Eukaryota"/>
</dbReference>
<dbReference type="GeneTree" id="ENSGT00390000012959"/>
<dbReference type="InParanoid" id="Q09315"/>
<dbReference type="OMA" id="THFISNM"/>
<dbReference type="OrthoDB" id="10014216at2759"/>
<dbReference type="PhylomeDB" id="Q09315"/>
<dbReference type="Reactome" id="R-CEL-429958">
    <property type="pathway name" value="mRNA decay by 3' to 5' exoribonuclease"/>
</dbReference>
<dbReference type="Reactome" id="R-CEL-73621">
    <property type="pathway name" value="Pyrimidine catabolism"/>
</dbReference>
<dbReference type="PRO" id="PR:Q09315"/>
<dbReference type="Proteomes" id="UP000001940">
    <property type="component" value="Chromosome III"/>
</dbReference>
<dbReference type="Bgee" id="WBGene00017775">
    <property type="expression patterns" value="Expressed in adult organism and 4 other cell types or tissues"/>
</dbReference>
<dbReference type="ExpressionAtlas" id="Q09315">
    <property type="expression patterns" value="baseline and differential"/>
</dbReference>
<dbReference type="GO" id="GO:0005737">
    <property type="term" value="C:cytoplasm"/>
    <property type="evidence" value="ECO:0000318"/>
    <property type="project" value="GO_Central"/>
</dbReference>
<dbReference type="GO" id="GO:0008253">
    <property type="term" value="F:5'-nucleotidase activity"/>
    <property type="evidence" value="ECO:0000318"/>
    <property type="project" value="GO_Central"/>
</dbReference>
<dbReference type="GO" id="GO:0000287">
    <property type="term" value="F:magnesium ion binding"/>
    <property type="evidence" value="ECO:0007669"/>
    <property type="project" value="InterPro"/>
</dbReference>
<dbReference type="GO" id="GO:0000166">
    <property type="term" value="F:nucleotide binding"/>
    <property type="evidence" value="ECO:0007669"/>
    <property type="project" value="UniProtKB-KW"/>
</dbReference>
<dbReference type="GO" id="GO:0009117">
    <property type="term" value="P:nucleotide metabolic process"/>
    <property type="evidence" value="ECO:0007669"/>
    <property type="project" value="UniProtKB-KW"/>
</dbReference>
<dbReference type="CDD" id="cd07504">
    <property type="entry name" value="HAD_5NT"/>
    <property type="match status" value="1"/>
</dbReference>
<dbReference type="FunFam" id="1.10.150.340:FF:000001">
    <property type="entry name" value="Cytosolic 5-nucleotidase 3-like"/>
    <property type="match status" value="1"/>
</dbReference>
<dbReference type="FunFam" id="3.40.50.1000:FF:000300">
    <property type="entry name" value="Putative cytosolic 5'-nucleotidase 3"/>
    <property type="match status" value="1"/>
</dbReference>
<dbReference type="Gene3D" id="3.40.50.1000">
    <property type="entry name" value="HAD superfamily/HAD-like"/>
    <property type="match status" value="1"/>
</dbReference>
<dbReference type="Gene3D" id="1.10.150.340">
    <property type="entry name" value="Pyrimidine 5'-nucleotidase (UMPH-1), N-terminal domain"/>
    <property type="match status" value="1"/>
</dbReference>
<dbReference type="InterPro" id="IPR036412">
    <property type="entry name" value="HAD-like_sf"/>
</dbReference>
<dbReference type="InterPro" id="IPR023214">
    <property type="entry name" value="HAD_sf"/>
</dbReference>
<dbReference type="InterPro" id="IPR006434">
    <property type="entry name" value="Pyrimidine_nucleotidase_eu"/>
</dbReference>
<dbReference type="NCBIfam" id="TIGR01544">
    <property type="entry name" value="HAD-SF-IE"/>
    <property type="match status" value="1"/>
</dbReference>
<dbReference type="PANTHER" id="PTHR13045">
    <property type="entry name" value="5'-NUCLEOTIDASE"/>
    <property type="match status" value="1"/>
</dbReference>
<dbReference type="PANTHER" id="PTHR13045:SF0">
    <property type="entry name" value="7-METHYLGUANOSINE PHOSPHATE-SPECIFIC 5'-NUCLEOTIDASE"/>
    <property type="match status" value="1"/>
</dbReference>
<dbReference type="Pfam" id="PF05822">
    <property type="entry name" value="UMPH-1"/>
    <property type="match status" value="1"/>
</dbReference>
<dbReference type="SFLD" id="SFLDG01128">
    <property type="entry name" value="C1.4:_5'-Nucleotidase_Like"/>
    <property type="match status" value="1"/>
</dbReference>
<dbReference type="SFLD" id="SFLDS00003">
    <property type="entry name" value="Haloacid_Dehalogenase"/>
    <property type="match status" value="1"/>
</dbReference>
<dbReference type="SUPFAM" id="SSF56784">
    <property type="entry name" value="HAD-like"/>
    <property type="match status" value="1"/>
</dbReference>
<organism>
    <name type="scientific">Caenorhabditis elegans</name>
    <dbReference type="NCBI Taxonomy" id="6239"/>
    <lineage>
        <taxon>Eukaryota</taxon>
        <taxon>Metazoa</taxon>
        <taxon>Ecdysozoa</taxon>
        <taxon>Nematoda</taxon>
        <taxon>Chromadorea</taxon>
        <taxon>Rhabditida</taxon>
        <taxon>Rhabditina</taxon>
        <taxon>Rhabditomorpha</taxon>
        <taxon>Rhabditoidea</taxon>
        <taxon>Rhabditidae</taxon>
        <taxon>Peloderinae</taxon>
        <taxon>Caenorhabditis</taxon>
    </lineage>
</organism>
<protein>
    <recommendedName>
        <fullName evidence="1">Putative cytosolic 5'-nucleotidase 3</fullName>
        <ecNumber evidence="1">3.1.3.5</ecNumber>
    </recommendedName>
    <alternativeName>
        <fullName>Putative pyrimidine 5'-nucleotidase</fullName>
    </alternativeName>
</protein>
<proteinExistence type="inferred from homology"/>
<accession>Q09315</accession>
<accession>Q95QJ1</accession>
<sequence>MSNKVARRLGKCLFVSGRRFESRQSILQLRTETLTDTPLSATLDQSQFSMFKAAEIVNAAAACAEAECIEQLKKTDVVPLLMNYLLGEEQILVADPTAVAAKLRKMVVGGAGKTVVISDFDYTLSRFANEQGERLSTTHGVFDDNVMRLKPELGQKFVDLKNKYYPIEFSPNLTMEEKIPHMEKWWGTSHSLIVNEKFSKNTIEDFVRQSRIVFKDGAEDFIEALDAHNIPLVIFSAGIGNIIEYFLQQKLGAIPRNTHFISNMILFDEDDNACAFSEPLIHTFCKNSSVIQKETSFFHDIAGRVNVILLGDSMGDIHMDVGVERDGPTLKVGYYNGSLDDTAALQHYEEVYDIVLIHDPTLNVAQKIVDIINSSH</sequence>
<evidence type="ECO:0000250" key="1">
    <source>
        <dbReference type="UniProtKB" id="Q9D020"/>
    </source>
</evidence>
<evidence type="ECO:0000250" key="2">
    <source>
        <dbReference type="UniProtKB" id="Q9W197"/>
    </source>
</evidence>
<evidence type="ECO:0000305" key="3"/>
<feature type="chain" id="PRO_0000065315" description="Putative cytosolic 5'-nucleotidase 3">
    <location>
        <begin position="1"/>
        <end position="376"/>
    </location>
</feature>
<feature type="active site" description="Nucleophile" evidence="1">
    <location>
        <position position="119"/>
    </location>
</feature>
<feature type="active site" description="Proton donor" evidence="1">
    <location>
        <position position="121"/>
    </location>
</feature>
<feature type="binding site" evidence="1">
    <location>
        <position position="119"/>
    </location>
    <ligand>
        <name>Mg(2+)</name>
        <dbReference type="ChEBI" id="CHEBI:18420"/>
    </ligand>
</feature>
<feature type="binding site" evidence="1">
    <location>
        <position position="121"/>
    </location>
    <ligand>
        <name>Mg(2+)</name>
        <dbReference type="ChEBI" id="CHEBI:18420"/>
    </ligand>
</feature>
<feature type="binding site" evidence="2">
    <location>
        <position position="168"/>
    </location>
    <ligand>
        <name>substrate</name>
    </ligand>
</feature>
<feature type="binding site" evidence="2">
    <location>
        <position position="189"/>
    </location>
    <ligand>
        <name>substrate</name>
    </ligand>
</feature>
<feature type="binding site" evidence="1">
    <location>
        <begin position="236"/>
        <end position="237"/>
    </location>
    <ligand>
        <name>substrate</name>
    </ligand>
</feature>
<feature type="binding site" evidence="1">
    <location>
        <position position="286"/>
    </location>
    <ligand>
        <name>substrate</name>
    </ligand>
</feature>
<feature type="binding site" evidence="1">
    <location>
        <position position="312"/>
    </location>
    <ligand>
        <name>Mg(2+)</name>
        <dbReference type="ChEBI" id="CHEBI:18420"/>
    </ligand>
</feature>
<feature type="splice variant" id="VSP_002446" description="In isoform c." evidence="3">
    <location>
        <begin position="1"/>
        <end position="49"/>
    </location>
</feature>
<feature type="splice variant" id="VSP_002447" description="In isoform a." evidence="3">
    <original>MSNKVARRLGKCLFVSGRRFESRQSILQLR</original>
    <variation>MGHCFSVFSSKETINC</variation>
    <location>
        <begin position="1"/>
        <end position="30"/>
    </location>
</feature>
<name>5NT3_CAEEL</name>
<reference key="1">
    <citation type="journal article" date="1998" name="Science">
        <title>Genome sequence of the nematode C. elegans: a platform for investigating biology.</title>
        <authorList>
            <consortium name="The C. elegans sequencing consortium"/>
        </authorList>
    </citation>
    <scope>NUCLEOTIDE SEQUENCE [LARGE SCALE GENOMIC DNA]</scope>
    <scope>ALTERNATIVE SPLICING</scope>
    <source>
        <strain>Bristol N2</strain>
    </source>
</reference>
<gene>
    <name type="ORF">F25B5.3</name>
</gene>
<comment type="catalytic activity">
    <reaction evidence="1">
        <text>a ribonucleoside 5'-phosphate + H2O = a ribonucleoside + phosphate</text>
        <dbReference type="Rhea" id="RHEA:12484"/>
        <dbReference type="ChEBI" id="CHEBI:15377"/>
        <dbReference type="ChEBI" id="CHEBI:18254"/>
        <dbReference type="ChEBI" id="CHEBI:43474"/>
        <dbReference type="ChEBI" id="CHEBI:58043"/>
        <dbReference type="EC" id="3.1.3.5"/>
    </reaction>
</comment>
<comment type="subcellular location">
    <subcellularLocation>
        <location evidence="3">Cytoplasm</location>
    </subcellularLocation>
</comment>
<comment type="alternative products">
    <event type="alternative splicing"/>
    <isoform>
        <id>Q09315-1</id>
        <name>b</name>
        <sequence type="displayed"/>
    </isoform>
    <isoform>
        <id>Q09315-2</id>
        <name>a</name>
        <sequence type="described" ref="VSP_002447"/>
    </isoform>
    <isoform>
        <id>Q09315-3</id>
        <name>c</name>
        <sequence type="described" ref="VSP_002446"/>
    </isoform>
    <text>Experimental confirmation may be lacking for some isoforms.</text>
</comment>
<comment type="similarity">
    <text evidence="3">Belongs to the pyrimidine 5'-nucleotidase family.</text>
</comment>